<feature type="chain" id="PRO_0000081582" description="ELAV-like protein 3">
    <location>
        <begin position="1"/>
        <end position="367"/>
    </location>
</feature>
<feature type="domain" description="RRM 1" evidence="1">
    <location>
        <begin position="39"/>
        <end position="117"/>
    </location>
</feature>
<feature type="domain" description="RRM 2" evidence="1">
    <location>
        <begin position="125"/>
        <end position="205"/>
    </location>
</feature>
<feature type="domain" description="RRM 3" evidence="1">
    <location>
        <begin position="284"/>
        <end position="362"/>
    </location>
</feature>
<feature type="splice variant" id="VSP_005790" description="In isoform HuC-S." evidence="6">
    <location>
        <begin position="251"/>
        <end position="257"/>
    </location>
</feature>
<feature type="strand" evidence="8">
    <location>
        <begin position="41"/>
        <end position="44"/>
    </location>
</feature>
<feature type="helix" evidence="8">
    <location>
        <begin position="52"/>
        <end position="60"/>
    </location>
</feature>
<feature type="strand" evidence="10">
    <location>
        <begin position="61"/>
        <end position="63"/>
    </location>
</feature>
<feature type="strand" evidence="8">
    <location>
        <begin position="66"/>
        <end position="70"/>
    </location>
</feature>
<feature type="strand" evidence="8">
    <location>
        <begin position="74"/>
        <end position="76"/>
    </location>
</feature>
<feature type="strand" evidence="8">
    <location>
        <begin position="81"/>
        <end position="86"/>
    </location>
</feature>
<feature type="helix" evidence="8">
    <location>
        <begin position="90"/>
        <end position="100"/>
    </location>
</feature>
<feature type="strand" evidence="8">
    <location>
        <begin position="101"/>
        <end position="104"/>
    </location>
</feature>
<feature type="strand" evidence="8">
    <location>
        <begin position="109"/>
        <end position="113"/>
    </location>
</feature>
<feature type="strand" evidence="9">
    <location>
        <begin position="128"/>
        <end position="131"/>
    </location>
</feature>
<feature type="helix" evidence="9">
    <location>
        <begin position="138"/>
        <end position="146"/>
    </location>
</feature>
<feature type="strand" evidence="9">
    <location>
        <begin position="151"/>
        <end position="157"/>
    </location>
</feature>
<feature type="strand" evidence="9">
    <location>
        <begin position="160"/>
        <end position="163"/>
    </location>
</feature>
<feature type="strand" evidence="9">
    <location>
        <begin position="168"/>
        <end position="175"/>
    </location>
</feature>
<feature type="helix" evidence="9">
    <location>
        <begin position="176"/>
        <end position="186"/>
    </location>
</feature>
<feature type="turn" evidence="9">
    <location>
        <begin position="192"/>
        <end position="195"/>
    </location>
</feature>
<feature type="strand" evidence="9">
    <location>
        <begin position="199"/>
        <end position="201"/>
    </location>
</feature>
<organism>
    <name type="scientific">Mus musculus</name>
    <name type="common">Mouse</name>
    <dbReference type="NCBI Taxonomy" id="10090"/>
    <lineage>
        <taxon>Eukaryota</taxon>
        <taxon>Metazoa</taxon>
        <taxon>Chordata</taxon>
        <taxon>Craniata</taxon>
        <taxon>Vertebrata</taxon>
        <taxon>Euteleostomi</taxon>
        <taxon>Mammalia</taxon>
        <taxon>Eutheria</taxon>
        <taxon>Euarchontoglires</taxon>
        <taxon>Glires</taxon>
        <taxon>Rodentia</taxon>
        <taxon>Myomorpha</taxon>
        <taxon>Muroidea</taxon>
        <taxon>Muridae</taxon>
        <taxon>Murinae</taxon>
        <taxon>Mus</taxon>
        <taxon>Mus</taxon>
    </lineage>
</organism>
<proteinExistence type="evidence at protein level"/>
<sequence>MVTQILGAMESQVGGGPAGPALPNGPLLGTNGATDDSKTNLIVNYLPQNMTQDEFKSLFGSIGDIESCKLVRDKITGQSLGYGFVNYSDPNDADKAINTLNGLKLQTKTIKVSYARPSSASIRDANLYVSGLPKTMSQKEMEQLFSQYGRIITSRILLDQATGVSRGVGFIRFDKRIEAEEAIKGLNGQKPLGAAEPITVKFANNPSQKTGQALLTHLYQSSARRYAGPLHHQTQRFRLDNLLNMAYGVKSPLSLIARFSPIAIDGMSGLAGVGLSGGAAGAGWCIFVYNLSPEADESVLWQLFGPFGAVTNVKVIRDFTTNKCKGFGFVTMTNYDEAAMAIASLNGYRLGERVLQVSFKTSKQHKA</sequence>
<accession>Q60900</accession>
<accession>Q60901</accession>
<reference key="1">
    <citation type="journal article" date="1996" name="Nucleic Acids Res.">
        <title>Two different RNA binding activities for the AU-rich element and the poly(A) sequence of the mouse neuronal protein mHuC.</title>
        <authorList>
            <person name="Abe R."/>
            <person name="Sakashita E."/>
            <person name="Yamamoto K."/>
            <person name="Sakamoto H."/>
        </authorList>
    </citation>
    <scope>NUCLEOTIDE SEQUENCE [MRNA] (ISOFORMS HUC-L AND HUC-S)</scope>
    <scope>FUNCTION</scope>
    <scope>DOMAIN</scope>
    <scope>TISSUE SPECIFICITY</scope>
    <source>
        <tissue>Brain</tissue>
    </source>
</reference>
<reference key="2">
    <citation type="journal article" date="2004" name="Genome Res.">
        <title>The status, quality, and expansion of the NIH full-length cDNA project: the Mammalian Gene Collection (MGC).</title>
        <authorList>
            <consortium name="The MGC Project Team"/>
        </authorList>
    </citation>
    <scope>NUCLEOTIDE SEQUENCE [LARGE SCALE MRNA] (ISOFORM HUC-L)</scope>
    <source>
        <strain>C57BL/6J</strain>
        <tissue>Brain</tissue>
    </source>
</reference>
<reference key="3">
    <citation type="journal article" date="2001" name="Proc. Natl. Acad. Sci. U.S.A.">
        <title>Posttranscriptional regulation of gene expression in learning by the neuronal ELAV-like mRNA-stabilizing proteins.</title>
        <authorList>
            <person name="Quattrone A."/>
            <person name="Pascale A."/>
            <person name="Nogues X."/>
            <person name="Zhao W."/>
            <person name="Gusev P."/>
            <person name="Pacini A."/>
            <person name="Alkon D.L."/>
        </authorList>
    </citation>
    <scope>FUNCTION</scope>
    <scope>TISSUE SPECIFICITY</scope>
    <scope>INDUCTION BY MEMORY TRAINING</scope>
    <scope>DISRUPTION PHENOTYPE</scope>
</reference>
<reference key="4">
    <citation type="journal article" date="2010" name="Cell">
        <title>A tissue-specific atlas of mouse protein phosphorylation and expression.</title>
        <authorList>
            <person name="Huttlin E.L."/>
            <person name="Jedrychowski M.P."/>
            <person name="Elias J.E."/>
            <person name="Goswami T."/>
            <person name="Rad R."/>
            <person name="Beausoleil S.A."/>
            <person name="Villen J."/>
            <person name="Haas W."/>
            <person name="Sowa M.E."/>
            <person name="Gygi S.P."/>
        </authorList>
    </citation>
    <scope>IDENTIFICATION BY MASS SPECTROMETRY [LARGE SCALE ANALYSIS]</scope>
    <source>
        <tissue>Brain</tissue>
    </source>
</reference>
<reference key="5">
    <citation type="journal article" date="2011" name="Biochimie">
        <title>Microtubule association of a neuronal RNA-binding protein HuD through its binding to the light chain of MAP1B.</title>
        <authorList>
            <person name="Fujiwara Y."/>
            <person name="Kasashima K."/>
            <person name="Saito K."/>
            <person name="Fukuda M."/>
            <person name="Fukao A."/>
            <person name="Sasano Y."/>
            <person name="Inoue K."/>
            <person name="Fujiwara T."/>
            <person name="Sakamoto H."/>
        </authorList>
    </citation>
    <scope>INTERACTION WITH MAP1B LIGHT CHAIN LC1</scope>
</reference>
<reference key="6">
    <citation type="journal article" date="2000" name="Nucleic Acids Res.">
        <title>NMR studies on functional structures of the AU-rich element-binding domains of Hu antigen C.</title>
        <authorList>
            <person name="Inoue M."/>
            <person name="Muto Y."/>
            <person name="Sakamoto H."/>
            <person name="Yokoyama S."/>
        </authorList>
    </citation>
    <scope>STRUCTURE BY NMR OF 36-208</scope>
    <scope>RNA-BINDING</scope>
    <scope>FUNCTION</scope>
    <scope>DOMAIN</scope>
</reference>
<name>ELAV3_MOUSE</name>
<protein>
    <recommendedName>
        <fullName>ELAV-like protein 3</fullName>
    </recommendedName>
    <alternativeName>
        <fullName>Hu-antigen C</fullName>
        <shortName>HuC</shortName>
    </alternativeName>
</protein>
<comment type="function">
    <text evidence="2 3 5 6">RNA-binding protein that binds to AU-rich element (ARE) sequences of target mRNAs, including VEGF mRNA (PubMed:10734193, PubMed:9016658). May also bind poly-A tracts via RRM 3 (PubMed:9016658). May be involved in neuronal differentiation and maintenance (PubMed:9016658). Plays a role in the stabilization of GAP43 mRNA and in spatial learning (PubMed:11573004).</text>
</comment>
<comment type="subunit">
    <text evidence="4">Interacts with MAP1B light chain LC1.</text>
</comment>
<comment type="alternative products">
    <event type="alternative splicing"/>
    <isoform>
        <id>Q60900-1</id>
        <name>HuC-L</name>
        <sequence type="displayed"/>
    </isoform>
    <isoform>
        <id>Q60900-2</id>
        <name>HuC-S</name>
        <sequence type="described" ref="VSP_005790"/>
    </isoform>
</comment>
<comment type="tissue specificity">
    <text evidence="3 5">Brain specific (PubMed:9016658). Expressed in the hippocampus with expression in CA1, CA3 and dentate gyrus (PubMed:11573004).</text>
</comment>
<comment type="induction">
    <text evidence="3">Up-regulated after spatial learning in radial arm maze experiments and in Morris water maze experiments.</text>
</comment>
<comment type="domain">
    <text evidence="2 5">RRM 1 and RRM 2 bind cooperatively to AU-rich sequences in target mRNAs. RRM 3 binds to poly-A mRNA sequences.</text>
</comment>
<comment type="disruption phenotype">
    <text evidence="3">RNAi-mediated knockdown results in reduced Gap43 mRNA levels and impaired learning behavior in radial arm maze training.</text>
</comment>
<comment type="similarity">
    <text evidence="7">Belongs to the RRM elav family.</text>
</comment>
<gene>
    <name type="primary">Elavl3</name>
    <name type="synonym">Huc</name>
</gene>
<keyword id="KW-0002">3D-structure</keyword>
<keyword id="KW-0025">Alternative splicing</keyword>
<keyword id="KW-0217">Developmental protein</keyword>
<keyword id="KW-0221">Differentiation</keyword>
<keyword id="KW-0524">Neurogenesis</keyword>
<keyword id="KW-1185">Reference proteome</keyword>
<keyword id="KW-0677">Repeat</keyword>
<keyword id="KW-0694">RNA-binding</keyword>
<evidence type="ECO:0000255" key="1">
    <source>
        <dbReference type="PROSITE-ProRule" id="PRU00176"/>
    </source>
</evidence>
<evidence type="ECO:0000269" key="2">
    <source>
    </source>
</evidence>
<evidence type="ECO:0000269" key="3">
    <source>
    </source>
</evidence>
<evidence type="ECO:0000269" key="4">
    <source>
    </source>
</evidence>
<evidence type="ECO:0000269" key="5">
    <source>
    </source>
</evidence>
<evidence type="ECO:0000303" key="6">
    <source>
    </source>
</evidence>
<evidence type="ECO:0000305" key="7"/>
<evidence type="ECO:0007829" key="8">
    <source>
        <dbReference type="PDB" id="1D8Z"/>
    </source>
</evidence>
<evidence type="ECO:0007829" key="9">
    <source>
        <dbReference type="PDB" id="1D9A"/>
    </source>
</evidence>
<evidence type="ECO:0007829" key="10">
    <source>
        <dbReference type="PDB" id="1FNX"/>
    </source>
</evidence>
<dbReference type="EMBL" id="U29148">
    <property type="protein sequence ID" value="AAC52999.1"/>
    <property type="molecule type" value="mRNA"/>
</dbReference>
<dbReference type="EMBL" id="U29149">
    <property type="protein sequence ID" value="AAC53000.1"/>
    <property type="molecule type" value="mRNA"/>
</dbReference>
<dbReference type="EMBL" id="BC052097">
    <property type="protein sequence ID" value="AAH52097.1"/>
    <property type="molecule type" value="mRNA"/>
</dbReference>
<dbReference type="CCDS" id="CCDS52741.1">
    <molecule id="Q60900-1"/>
</dbReference>
<dbReference type="RefSeq" id="NP_034617.1">
    <molecule id="Q60900-1"/>
    <property type="nucleotide sequence ID" value="NM_010487.2"/>
</dbReference>
<dbReference type="RefSeq" id="XP_006510085.1">
    <molecule id="Q60900-2"/>
    <property type="nucleotide sequence ID" value="XM_006510022.2"/>
</dbReference>
<dbReference type="PDB" id="1D8Z">
    <property type="method" value="NMR"/>
    <property type="chains" value="A=36-123"/>
</dbReference>
<dbReference type="PDB" id="1D9A">
    <property type="method" value="NMR"/>
    <property type="chains" value="A=124-208"/>
</dbReference>
<dbReference type="PDB" id="1FNX">
    <property type="method" value="NMR"/>
    <property type="chains" value="H=36-208"/>
</dbReference>
<dbReference type="PDBsum" id="1D8Z"/>
<dbReference type="PDBsum" id="1D9A"/>
<dbReference type="PDBsum" id="1FNX"/>
<dbReference type="SMR" id="Q60900"/>
<dbReference type="BioGRID" id="200485">
    <property type="interactions" value="17"/>
</dbReference>
<dbReference type="FunCoup" id="Q60900">
    <property type="interactions" value="275"/>
</dbReference>
<dbReference type="IntAct" id="Q60900">
    <property type="interactions" value="4"/>
</dbReference>
<dbReference type="MINT" id="Q60900"/>
<dbReference type="STRING" id="10090.ENSMUSP00000003501"/>
<dbReference type="iPTMnet" id="Q60900"/>
<dbReference type="PhosphoSitePlus" id="Q60900"/>
<dbReference type="SwissPalm" id="Q60900"/>
<dbReference type="PaxDb" id="10090-ENSMUSP00000003501"/>
<dbReference type="PeptideAtlas" id="Q60900"/>
<dbReference type="ProteomicsDB" id="275657">
    <molecule id="Q60900-1"/>
</dbReference>
<dbReference type="ProteomicsDB" id="275658">
    <molecule id="Q60900-2"/>
</dbReference>
<dbReference type="Antibodypedia" id="25887">
    <property type="antibodies" value="174 antibodies from 27 providers"/>
</dbReference>
<dbReference type="DNASU" id="15571"/>
<dbReference type="Ensembl" id="ENSMUST00000003501.9">
    <molecule id="Q60900-1"/>
    <property type="protein sequence ID" value="ENSMUSP00000003501.8"/>
    <property type="gene ID" value="ENSMUSG00000003410.9"/>
</dbReference>
<dbReference type="GeneID" id="15571"/>
<dbReference type="KEGG" id="mmu:15571"/>
<dbReference type="UCSC" id="uc009onl.2">
    <molecule id="Q60900-1"/>
    <property type="organism name" value="mouse"/>
</dbReference>
<dbReference type="UCSC" id="uc009onn.1">
    <molecule id="Q60900-2"/>
    <property type="organism name" value="mouse"/>
</dbReference>
<dbReference type="AGR" id="MGI:109157"/>
<dbReference type="CTD" id="1995"/>
<dbReference type="MGI" id="MGI:109157">
    <property type="gene designation" value="Elavl3"/>
</dbReference>
<dbReference type="VEuPathDB" id="HostDB:ENSMUSG00000003410"/>
<dbReference type="eggNOG" id="KOG0145">
    <property type="taxonomic scope" value="Eukaryota"/>
</dbReference>
<dbReference type="GeneTree" id="ENSGT00940000160389"/>
<dbReference type="HOGENOM" id="CLU_026186_2_2_1"/>
<dbReference type="InParanoid" id="Q60900"/>
<dbReference type="OMA" id="YNQRRED"/>
<dbReference type="OrthoDB" id="266020at2759"/>
<dbReference type="PhylomeDB" id="Q60900"/>
<dbReference type="TreeFam" id="TF313377"/>
<dbReference type="BioGRID-ORCS" id="15571">
    <property type="hits" value="2 hits in 79 CRISPR screens"/>
</dbReference>
<dbReference type="CD-CODE" id="CE726F99">
    <property type="entry name" value="Postsynaptic density"/>
</dbReference>
<dbReference type="ChiTaRS" id="Elavl3">
    <property type="organism name" value="mouse"/>
</dbReference>
<dbReference type="EvolutionaryTrace" id="Q60900"/>
<dbReference type="PRO" id="PR:Q60900"/>
<dbReference type="Proteomes" id="UP000000589">
    <property type="component" value="Chromosome 9"/>
</dbReference>
<dbReference type="RNAct" id="Q60900">
    <property type="molecule type" value="protein"/>
</dbReference>
<dbReference type="Bgee" id="ENSMUSG00000003410">
    <property type="expression patterns" value="Expressed in embryonic brain and 119 other cell types or tissues"/>
</dbReference>
<dbReference type="ExpressionAtlas" id="Q60900">
    <property type="expression patterns" value="baseline and differential"/>
</dbReference>
<dbReference type="GO" id="GO:1990904">
    <property type="term" value="C:ribonucleoprotein complex"/>
    <property type="evidence" value="ECO:0007669"/>
    <property type="project" value="InterPro"/>
</dbReference>
<dbReference type="GO" id="GO:0035925">
    <property type="term" value="F:mRNA 3'-UTR AU-rich region binding"/>
    <property type="evidence" value="ECO:0000314"/>
    <property type="project" value="GO_Central"/>
</dbReference>
<dbReference type="GO" id="GO:0030154">
    <property type="term" value="P:cell differentiation"/>
    <property type="evidence" value="ECO:0007669"/>
    <property type="project" value="UniProtKB-KW"/>
</dbReference>
<dbReference type="GO" id="GO:0007399">
    <property type="term" value="P:nervous system development"/>
    <property type="evidence" value="ECO:0007669"/>
    <property type="project" value="UniProtKB-KW"/>
</dbReference>
<dbReference type="CDD" id="cd12772">
    <property type="entry name" value="RRM1_HuC"/>
    <property type="match status" value="1"/>
</dbReference>
<dbReference type="CDD" id="cd12776">
    <property type="entry name" value="RRM2_HuC"/>
    <property type="match status" value="1"/>
</dbReference>
<dbReference type="CDD" id="cd12655">
    <property type="entry name" value="RRM3_HuC"/>
    <property type="match status" value="1"/>
</dbReference>
<dbReference type="FunFam" id="3.30.70.330:FF:000006">
    <property type="entry name" value="ELAV-like 3"/>
    <property type="match status" value="1"/>
</dbReference>
<dbReference type="FunFam" id="3.30.70.330:FF:000005">
    <property type="entry name" value="ELAV-like protein"/>
    <property type="match status" value="1"/>
</dbReference>
<dbReference type="FunFam" id="3.30.70.330:FF:000017">
    <property type="entry name" value="ELAV-like protein"/>
    <property type="match status" value="1"/>
</dbReference>
<dbReference type="Gene3D" id="3.30.70.330">
    <property type="match status" value="3"/>
</dbReference>
<dbReference type="InterPro" id="IPR006548">
    <property type="entry name" value="ELAD_HU_SF"/>
</dbReference>
<dbReference type="InterPro" id="IPR034915">
    <property type="entry name" value="HuC_RRM3"/>
</dbReference>
<dbReference type="InterPro" id="IPR002343">
    <property type="entry name" value="Hud_Sxl_RNA"/>
</dbReference>
<dbReference type="InterPro" id="IPR012677">
    <property type="entry name" value="Nucleotide-bd_a/b_plait_sf"/>
</dbReference>
<dbReference type="InterPro" id="IPR035979">
    <property type="entry name" value="RBD_domain_sf"/>
</dbReference>
<dbReference type="InterPro" id="IPR000504">
    <property type="entry name" value="RRM_dom"/>
</dbReference>
<dbReference type="InterPro" id="IPR003954">
    <property type="entry name" value="RRM_dom_euk"/>
</dbReference>
<dbReference type="NCBIfam" id="TIGR01661">
    <property type="entry name" value="ELAV_HUD_SF"/>
    <property type="match status" value="1"/>
</dbReference>
<dbReference type="PANTHER" id="PTHR10352">
    <property type="entry name" value="EUKARYOTIC TRANSLATION INITIATION FACTOR 3 SUBUNIT G"/>
    <property type="match status" value="1"/>
</dbReference>
<dbReference type="Pfam" id="PF00076">
    <property type="entry name" value="RRM_1"/>
    <property type="match status" value="3"/>
</dbReference>
<dbReference type="PRINTS" id="PR00961">
    <property type="entry name" value="HUDSXLRNA"/>
</dbReference>
<dbReference type="SMART" id="SM00360">
    <property type="entry name" value="RRM"/>
    <property type="match status" value="3"/>
</dbReference>
<dbReference type="SMART" id="SM00361">
    <property type="entry name" value="RRM_1"/>
    <property type="match status" value="2"/>
</dbReference>
<dbReference type="SUPFAM" id="SSF54928">
    <property type="entry name" value="RNA-binding domain, RBD"/>
    <property type="match status" value="2"/>
</dbReference>
<dbReference type="PROSITE" id="PS50102">
    <property type="entry name" value="RRM"/>
    <property type="match status" value="3"/>
</dbReference>